<proteinExistence type="inferred from homology"/>
<organism>
    <name type="scientific">Bacteroides thetaiotaomicron (strain ATCC 29148 / DSM 2079 / JCM 5827 / CCUG 10774 / NCTC 10582 / VPI-5482 / E50)</name>
    <dbReference type="NCBI Taxonomy" id="226186"/>
    <lineage>
        <taxon>Bacteria</taxon>
        <taxon>Pseudomonadati</taxon>
        <taxon>Bacteroidota</taxon>
        <taxon>Bacteroidia</taxon>
        <taxon>Bacteroidales</taxon>
        <taxon>Bacteroidaceae</taxon>
        <taxon>Bacteroides</taxon>
    </lineage>
</organism>
<reference key="1">
    <citation type="journal article" date="2003" name="Science">
        <title>A genomic view of the human-Bacteroides thetaiotaomicron symbiosis.</title>
        <authorList>
            <person name="Xu J."/>
            <person name="Bjursell M.K."/>
            <person name="Himrod J."/>
            <person name="Deng S."/>
            <person name="Carmichael L.K."/>
            <person name="Chiang H.C."/>
            <person name="Hooper L.V."/>
            <person name="Gordon J.I."/>
        </authorList>
    </citation>
    <scope>NUCLEOTIDE SEQUENCE [LARGE SCALE GENOMIC DNA]</scope>
    <source>
        <strain>ATCC 29148 / DSM 2079 / JCM 5827 / CCUG 10774 / NCTC 10582 / VPI-5482 / E50</strain>
    </source>
</reference>
<dbReference type="EMBL" id="AE015928">
    <property type="protein sequence ID" value="AAO77806.1"/>
    <property type="molecule type" value="Genomic_DNA"/>
</dbReference>
<dbReference type="RefSeq" id="NP_811612.1">
    <property type="nucleotide sequence ID" value="NC_004663.1"/>
</dbReference>
<dbReference type="RefSeq" id="WP_008762052.1">
    <property type="nucleotide sequence ID" value="NZ_UYXG01000001.1"/>
</dbReference>
<dbReference type="SMR" id="Q8A4A3"/>
<dbReference type="FunCoup" id="Q8A4A3">
    <property type="interactions" value="620"/>
</dbReference>
<dbReference type="STRING" id="226186.BT_2700"/>
<dbReference type="PaxDb" id="226186-BT_2700"/>
<dbReference type="EnsemblBacteria" id="AAO77806">
    <property type="protein sequence ID" value="AAO77806"/>
    <property type="gene ID" value="BT_2700"/>
</dbReference>
<dbReference type="GeneID" id="60923870"/>
<dbReference type="KEGG" id="bth:BT_2700"/>
<dbReference type="PATRIC" id="fig|226186.12.peg.2742"/>
<dbReference type="eggNOG" id="COG0203">
    <property type="taxonomic scope" value="Bacteria"/>
</dbReference>
<dbReference type="HOGENOM" id="CLU_074407_0_1_10"/>
<dbReference type="InParanoid" id="Q8A4A3"/>
<dbReference type="OrthoDB" id="9809073at2"/>
<dbReference type="Proteomes" id="UP000001414">
    <property type="component" value="Chromosome"/>
</dbReference>
<dbReference type="GO" id="GO:0022625">
    <property type="term" value="C:cytosolic large ribosomal subunit"/>
    <property type="evidence" value="ECO:0000318"/>
    <property type="project" value="GO_Central"/>
</dbReference>
<dbReference type="GO" id="GO:0003735">
    <property type="term" value="F:structural constituent of ribosome"/>
    <property type="evidence" value="ECO:0000318"/>
    <property type="project" value="GO_Central"/>
</dbReference>
<dbReference type="GO" id="GO:0006412">
    <property type="term" value="P:translation"/>
    <property type="evidence" value="ECO:0007669"/>
    <property type="project" value="UniProtKB-UniRule"/>
</dbReference>
<dbReference type="FunFam" id="3.90.1030.10:FF:000006">
    <property type="entry name" value="50S ribosomal protein L17"/>
    <property type="match status" value="1"/>
</dbReference>
<dbReference type="Gene3D" id="3.90.1030.10">
    <property type="entry name" value="Ribosomal protein L17"/>
    <property type="match status" value="1"/>
</dbReference>
<dbReference type="HAMAP" id="MF_01368">
    <property type="entry name" value="Ribosomal_bL17"/>
    <property type="match status" value="1"/>
</dbReference>
<dbReference type="InterPro" id="IPR000456">
    <property type="entry name" value="Ribosomal_bL17"/>
</dbReference>
<dbReference type="InterPro" id="IPR047859">
    <property type="entry name" value="Ribosomal_bL17_CS"/>
</dbReference>
<dbReference type="InterPro" id="IPR036373">
    <property type="entry name" value="Ribosomal_bL17_sf"/>
</dbReference>
<dbReference type="NCBIfam" id="TIGR00059">
    <property type="entry name" value="L17"/>
    <property type="match status" value="1"/>
</dbReference>
<dbReference type="PANTHER" id="PTHR14413:SF16">
    <property type="entry name" value="LARGE RIBOSOMAL SUBUNIT PROTEIN BL17M"/>
    <property type="match status" value="1"/>
</dbReference>
<dbReference type="PANTHER" id="PTHR14413">
    <property type="entry name" value="RIBOSOMAL PROTEIN L17"/>
    <property type="match status" value="1"/>
</dbReference>
<dbReference type="Pfam" id="PF01196">
    <property type="entry name" value="Ribosomal_L17"/>
    <property type="match status" value="1"/>
</dbReference>
<dbReference type="SUPFAM" id="SSF64263">
    <property type="entry name" value="Prokaryotic ribosomal protein L17"/>
    <property type="match status" value="1"/>
</dbReference>
<dbReference type="PROSITE" id="PS01167">
    <property type="entry name" value="RIBOSOMAL_L17"/>
    <property type="match status" value="1"/>
</dbReference>
<sequence>MRHNKKFNHLGRTASHRSAMLSNMACSLIKHKRITTTVAKAKALKKFVEPLITKSKEDTTNSRRVVFSNLQDKIAVTELFKEISVKIADRPGGYTRIIKTGNRLGDNAEMCFIELVDYNENMAKEKVAKKATRTRRSKKSAEAAAPAAVEAPATEEPKAESAE</sequence>
<name>RL17_BACTN</name>
<protein>
    <recommendedName>
        <fullName evidence="1">Large ribosomal subunit protein bL17</fullName>
    </recommendedName>
    <alternativeName>
        <fullName evidence="3">50S ribosomal protein L17</fullName>
    </alternativeName>
</protein>
<evidence type="ECO:0000255" key="1">
    <source>
        <dbReference type="HAMAP-Rule" id="MF_01368"/>
    </source>
</evidence>
<evidence type="ECO:0000256" key="2">
    <source>
        <dbReference type="SAM" id="MobiDB-lite"/>
    </source>
</evidence>
<evidence type="ECO:0000305" key="3"/>
<keyword id="KW-1185">Reference proteome</keyword>
<keyword id="KW-0687">Ribonucleoprotein</keyword>
<keyword id="KW-0689">Ribosomal protein</keyword>
<gene>
    <name evidence="1" type="primary">rplQ</name>
    <name type="ordered locus">BT_2700</name>
</gene>
<feature type="chain" id="PRO_0000267830" description="Large ribosomal subunit protein bL17">
    <location>
        <begin position="1"/>
        <end position="163"/>
    </location>
</feature>
<feature type="region of interest" description="Disordered" evidence="2">
    <location>
        <begin position="127"/>
        <end position="163"/>
    </location>
</feature>
<feature type="compositionally biased region" description="Basic residues" evidence="2">
    <location>
        <begin position="129"/>
        <end position="138"/>
    </location>
</feature>
<feature type="compositionally biased region" description="Low complexity" evidence="2">
    <location>
        <begin position="142"/>
        <end position="154"/>
    </location>
</feature>
<accession>Q8A4A3</accession>
<comment type="subunit">
    <text evidence="1">Part of the 50S ribosomal subunit. Contacts protein L32.</text>
</comment>
<comment type="similarity">
    <text evidence="1">Belongs to the bacterial ribosomal protein bL17 family.</text>
</comment>